<protein>
    <recommendedName>
        <fullName>Putative cysteine-rich repeat secretory protein 7</fullName>
    </recommendedName>
</protein>
<keyword id="KW-1185">Reference proteome</keyword>
<keyword id="KW-0677">Repeat</keyword>
<keyword id="KW-0964">Secreted</keyword>
<keyword id="KW-0732">Signal</keyword>
<organism>
    <name type="scientific">Arabidopsis thaliana</name>
    <name type="common">Mouse-ear cress</name>
    <dbReference type="NCBI Taxonomy" id="3702"/>
    <lineage>
        <taxon>Eukaryota</taxon>
        <taxon>Viridiplantae</taxon>
        <taxon>Streptophyta</taxon>
        <taxon>Embryophyta</taxon>
        <taxon>Tracheophyta</taxon>
        <taxon>Spermatophyta</taxon>
        <taxon>Magnoliopsida</taxon>
        <taxon>eudicotyledons</taxon>
        <taxon>Gunneridae</taxon>
        <taxon>Pentapetalae</taxon>
        <taxon>rosids</taxon>
        <taxon>malvids</taxon>
        <taxon>Brassicales</taxon>
        <taxon>Brassicaceae</taxon>
        <taxon>Camelineae</taxon>
        <taxon>Arabidopsis</taxon>
    </lineage>
</organism>
<comment type="subcellular location">
    <subcellularLocation>
        <location evidence="4">Secreted</location>
    </subcellularLocation>
</comment>
<comment type="similarity">
    <text evidence="4">Belongs to the cysteine-rich repeat secretory protein family.</text>
</comment>
<comment type="sequence caution" evidence="4">
    <conflict type="erroneous initiation">
        <sequence resource="EMBL-CDS" id="AAF19716"/>
    </conflict>
</comment>
<feature type="signal peptide" evidence="1">
    <location>
        <begin position="1"/>
        <end position="24"/>
    </location>
</feature>
<feature type="chain" id="PRO_0000296135" description="Putative cysteine-rich repeat secretory protein 7">
    <location>
        <begin position="25"/>
        <end position="284"/>
    </location>
</feature>
<feature type="domain" description="Gnk2-homologous 1" evidence="2">
    <location>
        <begin position="26"/>
        <end position="128"/>
    </location>
</feature>
<feature type="domain" description="Gnk2-homologous 2" evidence="2">
    <location>
        <begin position="134"/>
        <end position="244"/>
    </location>
</feature>
<feature type="region of interest" description="Disordered" evidence="3">
    <location>
        <begin position="247"/>
        <end position="284"/>
    </location>
</feature>
<sequence>MARIILTAPLFYFFFSLLSHQTMSQPQHMHTFCSVDSFTQTSSYETNRNILLTTLSLTSSLVHYLNATIGLSPDTVYGMFLCRGDINTTSCSDCVQTAAIEIATNCTLNKRAFIYYDECMVRYSNVSFFSEFESKPVIVRYSLRSAPNSNRFNQTLSNKLDQLIPNVSPSTLIPYFVEDQERVTQLEGSYDLVSMIQCSPDLDPSNCTICLRFAYATVSTCCGVPSSALIFTPKCILRYRTFVLPSPAPSPSSLPPISPTSSPPLSLPPQLPPPLSQPPPPLST</sequence>
<dbReference type="EMBL" id="AC008047">
    <property type="protein sequence ID" value="AAF19716.1"/>
    <property type="status" value="ALT_INIT"/>
    <property type="molecule type" value="Genomic_DNA"/>
</dbReference>
<dbReference type="EMBL" id="CP002684">
    <property type="protein sequence ID" value="AEE34114.1"/>
    <property type="molecule type" value="Genomic_DNA"/>
</dbReference>
<dbReference type="EMBL" id="CP002684">
    <property type="protein sequence ID" value="ANM59399.1"/>
    <property type="molecule type" value="Genomic_DNA"/>
</dbReference>
<dbReference type="RefSeq" id="NP_001319306.1">
    <property type="nucleotide sequence ID" value="NM_001334108.1"/>
</dbReference>
<dbReference type="RefSeq" id="NP_001321761.1">
    <property type="nucleotide sequence ID" value="NM_001334109.1"/>
</dbReference>
<dbReference type="RefSeq" id="NP_176545.1">
    <property type="nucleotide sequence ID" value="NM_105035.2"/>
</dbReference>
<dbReference type="SMR" id="Q9SH41"/>
<dbReference type="STRING" id="3702.Q9SH41"/>
<dbReference type="GlyGen" id="Q9SH41">
    <property type="glycosylation" value="1 site"/>
</dbReference>
<dbReference type="PaxDb" id="3702-AT1G63570.1"/>
<dbReference type="EnsemblPlants" id="AT1G63570.1">
    <property type="protein sequence ID" value="AT1G63570.1"/>
    <property type="gene ID" value="AT1G63570"/>
</dbReference>
<dbReference type="EnsemblPlants" id="AT1G63570.3">
    <property type="protein sequence ID" value="AT1G63570.3"/>
    <property type="gene ID" value="AT1G63570"/>
</dbReference>
<dbReference type="GeneID" id="842662"/>
<dbReference type="Gramene" id="AT1G63570.1">
    <property type="protein sequence ID" value="AT1G63570.1"/>
    <property type="gene ID" value="AT1G63570"/>
</dbReference>
<dbReference type="Gramene" id="AT1G63570.3">
    <property type="protein sequence ID" value="AT1G63570.3"/>
    <property type="gene ID" value="AT1G63570"/>
</dbReference>
<dbReference type="KEGG" id="ath:AT1G63570"/>
<dbReference type="Araport" id="AT1G63570"/>
<dbReference type="TAIR" id="AT1G63570"/>
<dbReference type="eggNOG" id="ENOG502QWDY">
    <property type="taxonomic scope" value="Eukaryota"/>
</dbReference>
<dbReference type="HOGENOM" id="CLU_000288_35_0_1"/>
<dbReference type="InParanoid" id="Q9SH41"/>
<dbReference type="OrthoDB" id="688481at2759"/>
<dbReference type="PhylomeDB" id="Q9SH41"/>
<dbReference type="PRO" id="PR:Q9SH41"/>
<dbReference type="Proteomes" id="UP000006548">
    <property type="component" value="Chromosome 1"/>
</dbReference>
<dbReference type="ExpressionAtlas" id="Q9SH41">
    <property type="expression patterns" value="baseline and differential"/>
</dbReference>
<dbReference type="GO" id="GO:0005576">
    <property type="term" value="C:extracellular region"/>
    <property type="evidence" value="ECO:0007669"/>
    <property type="project" value="UniProtKB-SubCell"/>
</dbReference>
<dbReference type="CDD" id="cd23509">
    <property type="entry name" value="Gnk2-like"/>
    <property type="match status" value="2"/>
</dbReference>
<dbReference type="FunFam" id="3.30.430.20:FF:000003">
    <property type="entry name" value="Cysteine-rich RLK (RECEPTOR-like protein kinase) 10"/>
    <property type="match status" value="1"/>
</dbReference>
<dbReference type="Gene3D" id="3.30.430.20">
    <property type="entry name" value="Gnk2 domain, C-X8-C-X2-C motif"/>
    <property type="match status" value="2"/>
</dbReference>
<dbReference type="InterPro" id="IPR002902">
    <property type="entry name" value="GNK2"/>
</dbReference>
<dbReference type="InterPro" id="IPR038408">
    <property type="entry name" value="GNK2_sf"/>
</dbReference>
<dbReference type="PANTHER" id="PTHR32099">
    <property type="entry name" value="CYSTEINE-RICH REPEAT SECRETORY PROTEIN"/>
    <property type="match status" value="1"/>
</dbReference>
<dbReference type="PANTHER" id="PTHR32099:SF41">
    <property type="entry name" value="CYSTEINE-RICH REPEAT SECRETORY PROTEIN 4-RELATED"/>
    <property type="match status" value="1"/>
</dbReference>
<dbReference type="Pfam" id="PF01657">
    <property type="entry name" value="Stress-antifung"/>
    <property type="match status" value="2"/>
</dbReference>
<dbReference type="PROSITE" id="PS51473">
    <property type="entry name" value="GNK2"/>
    <property type="match status" value="2"/>
</dbReference>
<name>CRRS7_ARATH</name>
<reference key="1">
    <citation type="journal article" date="2000" name="Nature">
        <title>Sequence and analysis of chromosome 1 of the plant Arabidopsis thaliana.</title>
        <authorList>
            <person name="Theologis A."/>
            <person name="Ecker J.R."/>
            <person name="Palm C.J."/>
            <person name="Federspiel N.A."/>
            <person name="Kaul S."/>
            <person name="White O."/>
            <person name="Alonso J."/>
            <person name="Altafi H."/>
            <person name="Araujo R."/>
            <person name="Bowman C.L."/>
            <person name="Brooks S.Y."/>
            <person name="Buehler E."/>
            <person name="Chan A."/>
            <person name="Chao Q."/>
            <person name="Chen H."/>
            <person name="Cheuk R.F."/>
            <person name="Chin C.W."/>
            <person name="Chung M.K."/>
            <person name="Conn L."/>
            <person name="Conway A.B."/>
            <person name="Conway A.R."/>
            <person name="Creasy T.H."/>
            <person name="Dewar K."/>
            <person name="Dunn P."/>
            <person name="Etgu P."/>
            <person name="Feldblyum T.V."/>
            <person name="Feng J.-D."/>
            <person name="Fong B."/>
            <person name="Fujii C.Y."/>
            <person name="Gill J.E."/>
            <person name="Goldsmith A.D."/>
            <person name="Haas B."/>
            <person name="Hansen N.F."/>
            <person name="Hughes B."/>
            <person name="Huizar L."/>
            <person name="Hunter J.L."/>
            <person name="Jenkins J."/>
            <person name="Johnson-Hopson C."/>
            <person name="Khan S."/>
            <person name="Khaykin E."/>
            <person name="Kim C.J."/>
            <person name="Koo H.L."/>
            <person name="Kremenetskaia I."/>
            <person name="Kurtz D.B."/>
            <person name="Kwan A."/>
            <person name="Lam B."/>
            <person name="Langin-Hooper S."/>
            <person name="Lee A."/>
            <person name="Lee J.M."/>
            <person name="Lenz C.A."/>
            <person name="Li J.H."/>
            <person name="Li Y.-P."/>
            <person name="Lin X."/>
            <person name="Liu S.X."/>
            <person name="Liu Z.A."/>
            <person name="Luros J.S."/>
            <person name="Maiti R."/>
            <person name="Marziali A."/>
            <person name="Militscher J."/>
            <person name="Miranda M."/>
            <person name="Nguyen M."/>
            <person name="Nierman W.C."/>
            <person name="Osborne B.I."/>
            <person name="Pai G."/>
            <person name="Peterson J."/>
            <person name="Pham P.K."/>
            <person name="Rizzo M."/>
            <person name="Rooney T."/>
            <person name="Rowley D."/>
            <person name="Sakano H."/>
            <person name="Salzberg S.L."/>
            <person name="Schwartz J.R."/>
            <person name="Shinn P."/>
            <person name="Southwick A.M."/>
            <person name="Sun H."/>
            <person name="Tallon L.J."/>
            <person name="Tambunga G."/>
            <person name="Toriumi M.J."/>
            <person name="Town C.D."/>
            <person name="Utterback T."/>
            <person name="Van Aken S."/>
            <person name="Vaysberg M."/>
            <person name="Vysotskaia V.S."/>
            <person name="Walker M."/>
            <person name="Wu D."/>
            <person name="Yu G."/>
            <person name="Fraser C.M."/>
            <person name="Venter J.C."/>
            <person name="Davis R.W."/>
        </authorList>
    </citation>
    <scope>NUCLEOTIDE SEQUENCE [LARGE SCALE GENOMIC DNA]</scope>
    <source>
        <strain>cv. Columbia</strain>
    </source>
</reference>
<reference key="2">
    <citation type="journal article" date="2017" name="Plant J.">
        <title>Araport11: a complete reannotation of the Arabidopsis thaliana reference genome.</title>
        <authorList>
            <person name="Cheng C.Y."/>
            <person name="Krishnakumar V."/>
            <person name="Chan A.P."/>
            <person name="Thibaud-Nissen F."/>
            <person name="Schobel S."/>
            <person name="Town C.D."/>
        </authorList>
    </citation>
    <scope>GENOME REANNOTATION</scope>
    <source>
        <strain>cv. Columbia</strain>
    </source>
</reference>
<reference key="3">
    <citation type="journal article" date="2001" name="Plant Physiol.">
        <title>A superfamily of proteins with novel cysteine-rich repeats.</title>
        <authorList>
            <person name="Chen Z."/>
        </authorList>
    </citation>
    <scope>GENE FAMILY ORGANIZATION</scope>
    <scope>NOMENCLATURE</scope>
</reference>
<accession>Q9SH41</accession>
<gene>
    <name type="primary">CRRSP7</name>
    <name type="ordered locus">At1g63570</name>
    <name type="ORF">F2K11.7</name>
</gene>
<proteinExistence type="inferred from homology"/>
<evidence type="ECO:0000255" key="1"/>
<evidence type="ECO:0000255" key="2">
    <source>
        <dbReference type="PROSITE-ProRule" id="PRU00806"/>
    </source>
</evidence>
<evidence type="ECO:0000256" key="3">
    <source>
        <dbReference type="SAM" id="MobiDB-lite"/>
    </source>
</evidence>
<evidence type="ECO:0000305" key="4"/>